<gene>
    <name type="ordered locus">Arad_4458</name>
</gene>
<reference key="1">
    <citation type="journal article" date="2009" name="J. Bacteriol.">
        <title>Genome sequences of three Agrobacterium biovars help elucidate the evolution of multichromosome genomes in bacteria.</title>
        <authorList>
            <person name="Slater S.C."/>
            <person name="Goldman B.S."/>
            <person name="Goodner B."/>
            <person name="Setubal J.C."/>
            <person name="Farrand S.K."/>
            <person name="Nester E.W."/>
            <person name="Burr T.J."/>
            <person name="Banta L."/>
            <person name="Dickerman A.W."/>
            <person name="Paulsen I."/>
            <person name="Otten L."/>
            <person name="Suen G."/>
            <person name="Welch R."/>
            <person name="Almeida N.F."/>
            <person name="Arnold F."/>
            <person name="Burton O.T."/>
            <person name="Du Z."/>
            <person name="Ewing A."/>
            <person name="Godsy E."/>
            <person name="Heisel S."/>
            <person name="Houmiel K.L."/>
            <person name="Jhaveri J."/>
            <person name="Lu J."/>
            <person name="Miller N.M."/>
            <person name="Norton S."/>
            <person name="Chen Q."/>
            <person name="Phoolcharoen W."/>
            <person name="Ohlin V."/>
            <person name="Ondrusek D."/>
            <person name="Pride N."/>
            <person name="Stricklin S.L."/>
            <person name="Sun J."/>
            <person name="Wheeler C."/>
            <person name="Wilson L."/>
            <person name="Zhu H."/>
            <person name="Wood D.W."/>
        </authorList>
    </citation>
    <scope>NUCLEOTIDE SEQUENCE [LARGE SCALE GENOMIC DNA]</scope>
    <source>
        <strain>K84 / ATCC BAA-868</strain>
    </source>
</reference>
<proteinExistence type="inferred from homology"/>
<evidence type="ECO:0000255" key="1">
    <source>
        <dbReference type="HAMAP-Rule" id="MF_01187"/>
    </source>
</evidence>
<comment type="similarity">
    <text evidence="1">Belongs to the UPF0434 family.</text>
</comment>
<feature type="chain" id="PRO_1000164477" description="UPF0434 protein Arad_4458">
    <location>
        <begin position="1"/>
        <end position="62"/>
    </location>
</feature>
<accession>B9JCQ5</accession>
<sequence length="62" mass="7019">MDVTVSKVDTKLLDLLVCPLTKGSLSYDREKNELVSEKARLAYPIRDGIPIMLISEARRIED</sequence>
<name>Y4458_RHIR8</name>
<protein>
    <recommendedName>
        <fullName evidence="1">UPF0434 protein Arad_4458</fullName>
    </recommendedName>
</protein>
<organism>
    <name type="scientific">Rhizobium rhizogenes (strain K84 / ATCC BAA-868)</name>
    <name type="common">Agrobacterium radiobacter</name>
    <dbReference type="NCBI Taxonomy" id="311403"/>
    <lineage>
        <taxon>Bacteria</taxon>
        <taxon>Pseudomonadati</taxon>
        <taxon>Pseudomonadota</taxon>
        <taxon>Alphaproteobacteria</taxon>
        <taxon>Hyphomicrobiales</taxon>
        <taxon>Rhizobiaceae</taxon>
        <taxon>Rhizobium/Agrobacterium group</taxon>
        <taxon>Rhizobium</taxon>
    </lineage>
</organism>
<dbReference type="EMBL" id="CP000628">
    <property type="protein sequence ID" value="ACM28166.1"/>
    <property type="molecule type" value="Genomic_DNA"/>
</dbReference>
<dbReference type="RefSeq" id="WP_007694528.1">
    <property type="nucleotide sequence ID" value="NC_011985.1"/>
</dbReference>
<dbReference type="SMR" id="B9JCQ5"/>
<dbReference type="STRING" id="311403.Arad_4458"/>
<dbReference type="KEGG" id="ara:Arad_4458"/>
<dbReference type="eggNOG" id="COG2835">
    <property type="taxonomic scope" value="Bacteria"/>
</dbReference>
<dbReference type="HOGENOM" id="CLU_155659_2_0_5"/>
<dbReference type="Proteomes" id="UP000001600">
    <property type="component" value="Chromosome 1"/>
</dbReference>
<dbReference type="GO" id="GO:0005829">
    <property type="term" value="C:cytosol"/>
    <property type="evidence" value="ECO:0007669"/>
    <property type="project" value="TreeGrafter"/>
</dbReference>
<dbReference type="FunFam" id="2.20.25.10:FF:000002">
    <property type="entry name" value="UPF0434 protein YcaR"/>
    <property type="match status" value="1"/>
</dbReference>
<dbReference type="Gene3D" id="2.20.25.10">
    <property type="match status" value="1"/>
</dbReference>
<dbReference type="HAMAP" id="MF_01187">
    <property type="entry name" value="UPF0434"/>
    <property type="match status" value="1"/>
</dbReference>
<dbReference type="InterPro" id="IPR005651">
    <property type="entry name" value="Trm112-like"/>
</dbReference>
<dbReference type="PANTHER" id="PTHR33505:SF4">
    <property type="entry name" value="PROTEIN PREY, MITOCHONDRIAL"/>
    <property type="match status" value="1"/>
</dbReference>
<dbReference type="PANTHER" id="PTHR33505">
    <property type="entry name" value="ZGC:162634"/>
    <property type="match status" value="1"/>
</dbReference>
<dbReference type="Pfam" id="PF03966">
    <property type="entry name" value="Trm112p"/>
    <property type="match status" value="1"/>
</dbReference>
<dbReference type="SUPFAM" id="SSF158997">
    <property type="entry name" value="Trm112p-like"/>
    <property type="match status" value="1"/>
</dbReference>